<organism>
    <name type="scientific">Escherichia fergusonii (strain ATCC 35469 / DSM 13698 / CCUG 18766 / IAM 14443 / JCM 21226 / LMG 7866 / NBRC 102419 / NCTC 12128 / CDC 0568-73)</name>
    <dbReference type="NCBI Taxonomy" id="585054"/>
    <lineage>
        <taxon>Bacteria</taxon>
        <taxon>Pseudomonadati</taxon>
        <taxon>Pseudomonadota</taxon>
        <taxon>Gammaproteobacteria</taxon>
        <taxon>Enterobacterales</taxon>
        <taxon>Enterobacteriaceae</taxon>
        <taxon>Escherichia</taxon>
    </lineage>
</organism>
<proteinExistence type="inferred from homology"/>
<accession>B7LPA4</accession>
<dbReference type="EMBL" id="CU928158">
    <property type="protein sequence ID" value="CAQ90320.2"/>
    <property type="molecule type" value="Genomic_DNA"/>
</dbReference>
<dbReference type="RefSeq" id="WP_001701073.1">
    <property type="nucleotide sequence ID" value="NC_011740.1"/>
</dbReference>
<dbReference type="SMR" id="B7LPA4"/>
<dbReference type="GeneID" id="93779111"/>
<dbReference type="KEGG" id="efe:EFER_2826"/>
<dbReference type="HOGENOM" id="CLU_220733_1_0_6"/>
<dbReference type="OrthoDB" id="9806673at2"/>
<dbReference type="Proteomes" id="UP000000745">
    <property type="component" value="Chromosome"/>
</dbReference>
<dbReference type="GO" id="GO:0005737">
    <property type="term" value="C:cytoplasm"/>
    <property type="evidence" value="ECO:0007669"/>
    <property type="project" value="UniProtKB-SubCell"/>
</dbReference>
<dbReference type="GO" id="GO:0016149">
    <property type="term" value="F:translation release factor activity, codon specific"/>
    <property type="evidence" value="ECO:0007669"/>
    <property type="project" value="UniProtKB-UniRule"/>
</dbReference>
<dbReference type="FunFam" id="1.20.58.410:FF:000001">
    <property type="entry name" value="Peptide chain release factor 2"/>
    <property type="match status" value="1"/>
</dbReference>
<dbReference type="FunFam" id="3.30.160.20:FF:000010">
    <property type="entry name" value="Peptide chain release factor 2"/>
    <property type="match status" value="1"/>
</dbReference>
<dbReference type="Gene3D" id="3.30.160.20">
    <property type="match status" value="1"/>
</dbReference>
<dbReference type="Gene3D" id="3.30.70.1660">
    <property type="match status" value="1"/>
</dbReference>
<dbReference type="Gene3D" id="1.20.58.410">
    <property type="entry name" value="Release factor"/>
    <property type="match status" value="1"/>
</dbReference>
<dbReference type="HAMAP" id="MF_00094">
    <property type="entry name" value="Rel_fac_2"/>
    <property type="match status" value="1"/>
</dbReference>
<dbReference type="InterPro" id="IPR005139">
    <property type="entry name" value="PCRF"/>
</dbReference>
<dbReference type="InterPro" id="IPR000352">
    <property type="entry name" value="Pep_chain_release_fac_I"/>
</dbReference>
<dbReference type="InterPro" id="IPR045853">
    <property type="entry name" value="Pep_chain_release_fac_I_sf"/>
</dbReference>
<dbReference type="InterPro" id="IPR004374">
    <property type="entry name" value="PrfB"/>
</dbReference>
<dbReference type="NCBIfam" id="TIGR00020">
    <property type="entry name" value="prfB"/>
    <property type="match status" value="1"/>
</dbReference>
<dbReference type="PANTHER" id="PTHR43116:SF3">
    <property type="entry name" value="CLASS I PEPTIDE CHAIN RELEASE FACTOR"/>
    <property type="match status" value="1"/>
</dbReference>
<dbReference type="PANTHER" id="PTHR43116">
    <property type="entry name" value="PEPTIDE CHAIN RELEASE FACTOR 2"/>
    <property type="match status" value="1"/>
</dbReference>
<dbReference type="Pfam" id="PF03462">
    <property type="entry name" value="PCRF"/>
    <property type="match status" value="1"/>
</dbReference>
<dbReference type="Pfam" id="PF00472">
    <property type="entry name" value="RF-1"/>
    <property type="match status" value="1"/>
</dbReference>
<dbReference type="SMART" id="SM00937">
    <property type="entry name" value="PCRF"/>
    <property type="match status" value="1"/>
</dbReference>
<dbReference type="SUPFAM" id="SSF75620">
    <property type="entry name" value="Release factor"/>
    <property type="match status" value="1"/>
</dbReference>
<dbReference type="PROSITE" id="PS00745">
    <property type="entry name" value="RF_PROK_I"/>
    <property type="match status" value="1"/>
</dbReference>
<keyword id="KW-0963">Cytoplasm</keyword>
<keyword id="KW-0488">Methylation</keyword>
<keyword id="KW-0648">Protein biosynthesis</keyword>
<sequence length="365" mass="41221">MFEINPVNNRIQDLTERSDVLRGYLDYDAKKERLEEVNAELEQPDVWNEPERAQALGKERSSLEAVVDTLDQMKQGLEDVSGLLELAVEADDEETFNEAVAELDALEEKLAQLEFRRMFSGEYDSADCYLDIQAGSGGTEAQDWASMLERMYLRWAESRGFKTEIIEESEGEVAGIKSVTIKISGDYAYGWLRTETGVHRLVRKSPFDSGGRRHTSFSSAFVYPEVDDDIDIEINPADLRIDVYRASGAGGQHVNRTESAVRITHIPTGIVTQCQNDRSQHKNKDQAMKQMKAKLYELEMQKKNAEKQAMEDNKSDIGWGSQIRSYVLDDSRIKDLRTGVETRNTQAVLDGSLDQFIEASLKAGL</sequence>
<feature type="chain" id="PRO_1000117263" description="Peptide chain release factor 2">
    <location>
        <begin position="1"/>
        <end position="365"/>
    </location>
</feature>
<feature type="modified residue" description="N5-methylglutamine" evidence="1">
    <location>
        <position position="252"/>
    </location>
</feature>
<gene>
    <name evidence="1" type="primary">prfB</name>
    <name type="ordered locus">EFER_2826</name>
</gene>
<name>RF2_ESCF3</name>
<comment type="function">
    <text evidence="1">Peptide chain release factor 2 directs the termination of translation in response to the peptide chain termination codons UGA and UAA.</text>
</comment>
<comment type="subcellular location">
    <subcellularLocation>
        <location evidence="1">Cytoplasm</location>
    </subcellularLocation>
</comment>
<comment type="PTM">
    <text evidence="1">Methylated by PrmC. Methylation increases the termination efficiency of RF2.</text>
</comment>
<comment type="similarity">
    <text evidence="1">Belongs to the prokaryotic/mitochondrial release factor family.</text>
</comment>
<reference key="1">
    <citation type="journal article" date="2009" name="PLoS Genet.">
        <title>Organised genome dynamics in the Escherichia coli species results in highly diverse adaptive paths.</title>
        <authorList>
            <person name="Touchon M."/>
            <person name="Hoede C."/>
            <person name="Tenaillon O."/>
            <person name="Barbe V."/>
            <person name="Baeriswyl S."/>
            <person name="Bidet P."/>
            <person name="Bingen E."/>
            <person name="Bonacorsi S."/>
            <person name="Bouchier C."/>
            <person name="Bouvet O."/>
            <person name="Calteau A."/>
            <person name="Chiapello H."/>
            <person name="Clermont O."/>
            <person name="Cruveiller S."/>
            <person name="Danchin A."/>
            <person name="Diard M."/>
            <person name="Dossat C."/>
            <person name="Karoui M.E."/>
            <person name="Frapy E."/>
            <person name="Garry L."/>
            <person name="Ghigo J.M."/>
            <person name="Gilles A.M."/>
            <person name="Johnson J."/>
            <person name="Le Bouguenec C."/>
            <person name="Lescat M."/>
            <person name="Mangenot S."/>
            <person name="Martinez-Jehanne V."/>
            <person name="Matic I."/>
            <person name="Nassif X."/>
            <person name="Oztas S."/>
            <person name="Petit M.A."/>
            <person name="Pichon C."/>
            <person name="Rouy Z."/>
            <person name="Ruf C.S."/>
            <person name="Schneider D."/>
            <person name="Tourret J."/>
            <person name="Vacherie B."/>
            <person name="Vallenet D."/>
            <person name="Medigue C."/>
            <person name="Rocha E.P.C."/>
            <person name="Denamur E."/>
        </authorList>
    </citation>
    <scope>NUCLEOTIDE SEQUENCE [LARGE SCALE GENOMIC DNA]</scope>
    <source>
        <strain>ATCC 35469 / DSM 13698 / BCRC 15582 / CCUG 18766 / IAM 14443 / JCM 21226 / LMG 7866 / NBRC 102419 / NCTC 12128 / CDC 0568-73</strain>
    </source>
</reference>
<protein>
    <recommendedName>
        <fullName evidence="1">Peptide chain release factor 2</fullName>
        <shortName evidence="1">RF-2</shortName>
    </recommendedName>
</protein>
<evidence type="ECO:0000255" key="1">
    <source>
        <dbReference type="HAMAP-Rule" id="MF_00094"/>
    </source>
</evidence>